<proteinExistence type="inferred from homology"/>
<accession>B2FLM6</accession>
<protein>
    <recommendedName>
        <fullName evidence="1">Pimeloyl-[acyl-carrier protein] methyl ester esterase</fullName>
        <ecNumber evidence="1">3.1.1.85</ecNumber>
    </recommendedName>
    <alternativeName>
        <fullName evidence="1">Biotin synthesis protein BioH</fullName>
    </alternativeName>
    <alternativeName>
        <fullName evidence="1">Carboxylesterase BioH</fullName>
    </alternativeName>
</protein>
<dbReference type="EC" id="3.1.1.85" evidence="1"/>
<dbReference type="EMBL" id="AM743169">
    <property type="protein sequence ID" value="CAQ47824.1"/>
    <property type="molecule type" value="Genomic_DNA"/>
</dbReference>
<dbReference type="RefSeq" id="WP_012481536.1">
    <property type="nucleotide sequence ID" value="NC_010943.1"/>
</dbReference>
<dbReference type="SMR" id="B2FLM6"/>
<dbReference type="ESTHER" id="strm5-bioh">
    <property type="family name" value="BioH"/>
</dbReference>
<dbReference type="EnsemblBacteria" id="CAQ47824">
    <property type="protein sequence ID" value="CAQ47824"/>
    <property type="gene ID" value="Smlt4461"/>
</dbReference>
<dbReference type="KEGG" id="sml:Smlt4461"/>
<dbReference type="eggNOG" id="COG2267">
    <property type="taxonomic scope" value="Bacteria"/>
</dbReference>
<dbReference type="HOGENOM" id="CLU_020336_12_2_6"/>
<dbReference type="UniPathway" id="UPA00078"/>
<dbReference type="Proteomes" id="UP000008840">
    <property type="component" value="Chromosome"/>
</dbReference>
<dbReference type="GO" id="GO:0005737">
    <property type="term" value="C:cytoplasm"/>
    <property type="evidence" value="ECO:0007669"/>
    <property type="project" value="UniProtKB-SubCell"/>
</dbReference>
<dbReference type="GO" id="GO:0090499">
    <property type="term" value="F:pimelyl-[acyl-carrier protein] methyl ester esterase activity"/>
    <property type="evidence" value="ECO:0007669"/>
    <property type="project" value="UniProtKB-EC"/>
</dbReference>
<dbReference type="GO" id="GO:0009102">
    <property type="term" value="P:biotin biosynthetic process"/>
    <property type="evidence" value="ECO:0007669"/>
    <property type="project" value="UniProtKB-UniRule"/>
</dbReference>
<dbReference type="Gene3D" id="3.40.50.1820">
    <property type="entry name" value="alpha/beta hydrolase"/>
    <property type="match status" value="1"/>
</dbReference>
<dbReference type="HAMAP" id="MF_01260">
    <property type="entry name" value="Carboxylester"/>
    <property type="match status" value="1"/>
</dbReference>
<dbReference type="InterPro" id="IPR000073">
    <property type="entry name" value="AB_hydrolase_1"/>
</dbReference>
<dbReference type="InterPro" id="IPR029058">
    <property type="entry name" value="AB_hydrolase_fold"/>
</dbReference>
<dbReference type="InterPro" id="IPR010076">
    <property type="entry name" value="BioH"/>
</dbReference>
<dbReference type="InterPro" id="IPR050228">
    <property type="entry name" value="Carboxylesterase_BioH"/>
</dbReference>
<dbReference type="NCBIfam" id="TIGR01738">
    <property type="entry name" value="bioH"/>
    <property type="match status" value="1"/>
</dbReference>
<dbReference type="PANTHER" id="PTHR43194">
    <property type="entry name" value="HYDROLASE ALPHA/BETA FOLD FAMILY"/>
    <property type="match status" value="1"/>
</dbReference>
<dbReference type="PANTHER" id="PTHR43194:SF5">
    <property type="entry name" value="PIMELOYL-[ACYL-CARRIER PROTEIN] METHYL ESTER ESTERASE"/>
    <property type="match status" value="1"/>
</dbReference>
<dbReference type="Pfam" id="PF00561">
    <property type="entry name" value="Abhydrolase_1"/>
    <property type="match status" value="1"/>
</dbReference>
<dbReference type="SUPFAM" id="SSF53474">
    <property type="entry name" value="alpha/beta-Hydrolases"/>
    <property type="match status" value="1"/>
</dbReference>
<keyword id="KW-0093">Biotin biosynthesis</keyword>
<keyword id="KW-0963">Cytoplasm</keyword>
<keyword id="KW-0378">Hydrolase</keyword>
<keyword id="KW-1185">Reference proteome</keyword>
<keyword id="KW-0719">Serine esterase</keyword>
<reference key="1">
    <citation type="journal article" date="2008" name="Genome Biol.">
        <title>The complete genome, comparative and functional analysis of Stenotrophomonas maltophilia reveals an organism heavily shielded by drug resistance determinants.</title>
        <authorList>
            <person name="Crossman L.C."/>
            <person name="Gould V.C."/>
            <person name="Dow J.M."/>
            <person name="Vernikos G.S."/>
            <person name="Okazaki A."/>
            <person name="Sebaihia M."/>
            <person name="Saunders D."/>
            <person name="Arrowsmith C."/>
            <person name="Carver T."/>
            <person name="Peters N."/>
            <person name="Adlem E."/>
            <person name="Kerhornou A."/>
            <person name="Lord A."/>
            <person name="Murphy L."/>
            <person name="Seeger K."/>
            <person name="Squares R."/>
            <person name="Rutter S."/>
            <person name="Quail M.A."/>
            <person name="Rajandream M.A."/>
            <person name="Harris D."/>
            <person name="Churcher C."/>
            <person name="Bentley S.D."/>
            <person name="Parkhill J."/>
            <person name="Thomson N.R."/>
            <person name="Avison M.B."/>
        </authorList>
    </citation>
    <scope>NUCLEOTIDE SEQUENCE [LARGE SCALE GENOMIC DNA]</scope>
    <source>
        <strain>K279a</strain>
    </source>
</reference>
<gene>
    <name evidence="1" type="primary">bioH</name>
    <name type="ordered locus">Smlt4461</name>
</gene>
<sequence length="259" mass="27413">MHIDVTGRGPDLVLIHGWALQGGVFAPLVQRLADQFTLHLVDLPGHGHSREDTTPLRLPFVVGAIAAATPPAVWCGWSLGGLFALHAAATLPKVRGLAMIAATPRFVRGEDWPHAVEPAVFEQFGRELATDFGGTLERFLALDVMGSAHAREELRTLRQRLVERGAPTERALLEGLRLLESTDLRGALPTLGKPSLWIAGQRDRLVSPVAMQAAAALAPGAQALTIAHGGHAPFLGHADEVAAALQHFVAALSPADGGQ</sequence>
<organism>
    <name type="scientific">Stenotrophomonas maltophilia (strain K279a)</name>
    <dbReference type="NCBI Taxonomy" id="522373"/>
    <lineage>
        <taxon>Bacteria</taxon>
        <taxon>Pseudomonadati</taxon>
        <taxon>Pseudomonadota</taxon>
        <taxon>Gammaproteobacteria</taxon>
        <taxon>Lysobacterales</taxon>
        <taxon>Lysobacteraceae</taxon>
        <taxon>Stenotrophomonas</taxon>
        <taxon>Stenotrophomonas maltophilia group</taxon>
    </lineage>
</organism>
<comment type="function">
    <text evidence="1">The physiological role of BioH is to remove the methyl group introduced by BioC when the pimeloyl moiety is complete. It allows to synthesize pimeloyl-ACP via the fatty acid synthetic pathway through the hydrolysis of the ester bonds of pimeloyl-ACP esters.</text>
</comment>
<comment type="catalytic activity">
    <reaction evidence="1">
        <text>6-carboxyhexanoyl-[ACP] methyl ester + H2O = 6-carboxyhexanoyl-[ACP] + methanol + H(+)</text>
        <dbReference type="Rhea" id="RHEA:42700"/>
        <dbReference type="Rhea" id="RHEA-COMP:9955"/>
        <dbReference type="Rhea" id="RHEA-COMP:10186"/>
        <dbReference type="ChEBI" id="CHEBI:15377"/>
        <dbReference type="ChEBI" id="CHEBI:15378"/>
        <dbReference type="ChEBI" id="CHEBI:17790"/>
        <dbReference type="ChEBI" id="CHEBI:78846"/>
        <dbReference type="ChEBI" id="CHEBI:82735"/>
        <dbReference type="EC" id="3.1.1.85"/>
    </reaction>
</comment>
<comment type="pathway">
    <text evidence="1">Cofactor biosynthesis; biotin biosynthesis.</text>
</comment>
<comment type="subunit">
    <text evidence="1">Monomer.</text>
</comment>
<comment type="subcellular location">
    <subcellularLocation>
        <location evidence="1">Cytoplasm</location>
    </subcellularLocation>
</comment>
<comment type="similarity">
    <text evidence="1">Belongs to the AB hydrolase superfamily. Carboxylesterase BioH family.</text>
</comment>
<feature type="chain" id="PRO_1000140007" description="Pimeloyl-[acyl-carrier protein] methyl ester esterase">
    <location>
        <begin position="1"/>
        <end position="259"/>
    </location>
</feature>
<feature type="active site" description="Nucleophile" evidence="1">
    <location>
        <position position="78"/>
    </location>
</feature>
<feature type="active site" evidence="1">
    <location>
        <position position="203"/>
    </location>
</feature>
<feature type="active site" evidence="1">
    <location>
        <position position="231"/>
    </location>
</feature>
<feature type="binding site" evidence="1">
    <location>
        <position position="18"/>
    </location>
    <ligand>
        <name>substrate</name>
    </ligand>
</feature>
<feature type="binding site" evidence="1">
    <location>
        <begin position="78"/>
        <end position="79"/>
    </location>
    <ligand>
        <name>substrate</name>
    </ligand>
</feature>
<feature type="binding site" evidence="1">
    <location>
        <begin position="139"/>
        <end position="143"/>
    </location>
    <ligand>
        <name>substrate</name>
    </ligand>
</feature>
<feature type="binding site" evidence="1">
    <location>
        <position position="231"/>
    </location>
    <ligand>
        <name>substrate</name>
    </ligand>
</feature>
<evidence type="ECO:0000255" key="1">
    <source>
        <dbReference type="HAMAP-Rule" id="MF_01260"/>
    </source>
</evidence>
<name>BIOH_STRMK</name>